<sequence length="417" mass="45547">MFDESYSIKNFDDVLFKAISDEKRRQEEHIELIASENYVSPRVLEAQGSVLTNKYAEGYPGKRYYGGCEFVDVAEELAISRAKLLFGAHYVNVQPHSGSQANAAVMMALLSPGDTFMGMALPHGGHLTHGSKVNFSGKLYHSVEYGVDSNTGLIDYDALEKLALQHKPKLIIAGFSAYSRILDWARFREIADKVGAYLMADIAHVAGLVAVGLYPSPVPYADVVTTTTHKTLRGPRGGLILCKENEEIEKKLNSSVFPGMQGGPLMHVIAAKAVAFAEALLPEFKTYQQQVLANARTMCSVLQSRGYDIVSGGTDNHLLLVDLINKGITGKEADAAVGRANITVNKNSVPNDPRSPFVTSGLRLGTPAATTRGFKEREITLLSNWVADVLDNVHDETNISRVKTQVLLLCREFPVYA</sequence>
<protein>
    <recommendedName>
        <fullName evidence="1">Serine hydroxymethyltransferase</fullName>
        <shortName evidence="1">SHMT</shortName>
        <shortName evidence="1">Serine methylase</shortName>
        <ecNumber evidence="1">2.1.2.1</ecNumber>
    </recommendedName>
</protein>
<evidence type="ECO:0000255" key="1">
    <source>
        <dbReference type="HAMAP-Rule" id="MF_00051"/>
    </source>
</evidence>
<reference key="1">
    <citation type="journal article" date="2004" name="Nat. Genet.">
        <title>Evidence in the Legionella pneumophila genome for exploitation of host cell functions and high genome plasticity.</title>
        <authorList>
            <person name="Cazalet C."/>
            <person name="Rusniok C."/>
            <person name="Brueggemann H."/>
            <person name="Zidane N."/>
            <person name="Magnier A."/>
            <person name="Ma L."/>
            <person name="Tichit M."/>
            <person name="Jarraud S."/>
            <person name="Bouchier C."/>
            <person name="Vandenesch F."/>
            <person name="Kunst F."/>
            <person name="Etienne J."/>
            <person name="Glaser P."/>
            <person name="Buchrieser C."/>
        </authorList>
    </citation>
    <scope>NUCLEOTIDE SEQUENCE [LARGE SCALE GENOMIC DNA]</scope>
    <source>
        <strain>Paris</strain>
    </source>
</reference>
<gene>
    <name evidence="1" type="primary">glyA</name>
    <name type="ordered locus">lpp0791</name>
</gene>
<keyword id="KW-0028">Amino-acid biosynthesis</keyword>
<keyword id="KW-0963">Cytoplasm</keyword>
<keyword id="KW-0554">One-carbon metabolism</keyword>
<keyword id="KW-0663">Pyridoxal phosphate</keyword>
<keyword id="KW-0808">Transferase</keyword>
<name>GLYA_LEGPA</name>
<organism>
    <name type="scientific">Legionella pneumophila (strain Paris)</name>
    <dbReference type="NCBI Taxonomy" id="297246"/>
    <lineage>
        <taxon>Bacteria</taxon>
        <taxon>Pseudomonadati</taxon>
        <taxon>Pseudomonadota</taxon>
        <taxon>Gammaproteobacteria</taxon>
        <taxon>Legionellales</taxon>
        <taxon>Legionellaceae</taxon>
        <taxon>Legionella</taxon>
    </lineage>
</organism>
<comment type="function">
    <text evidence="1">Catalyzes the reversible interconversion of serine and glycine with tetrahydrofolate (THF) serving as the one-carbon carrier. This reaction serves as the major source of one-carbon groups required for the biosynthesis of purines, thymidylate, methionine, and other important biomolecules. Also exhibits THF-independent aldolase activity toward beta-hydroxyamino acids, producing glycine and aldehydes, via a retro-aldol mechanism.</text>
</comment>
<comment type="catalytic activity">
    <reaction evidence="1">
        <text>(6R)-5,10-methylene-5,6,7,8-tetrahydrofolate + glycine + H2O = (6S)-5,6,7,8-tetrahydrofolate + L-serine</text>
        <dbReference type="Rhea" id="RHEA:15481"/>
        <dbReference type="ChEBI" id="CHEBI:15377"/>
        <dbReference type="ChEBI" id="CHEBI:15636"/>
        <dbReference type="ChEBI" id="CHEBI:33384"/>
        <dbReference type="ChEBI" id="CHEBI:57305"/>
        <dbReference type="ChEBI" id="CHEBI:57453"/>
        <dbReference type="EC" id="2.1.2.1"/>
    </reaction>
</comment>
<comment type="cofactor">
    <cofactor evidence="1">
        <name>pyridoxal 5'-phosphate</name>
        <dbReference type="ChEBI" id="CHEBI:597326"/>
    </cofactor>
</comment>
<comment type="pathway">
    <text evidence="1">One-carbon metabolism; tetrahydrofolate interconversion.</text>
</comment>
<comment type="pathway">
    <text evidence="1">Amino-acid biosynthesis; glycine biosynthesis; glycine from L-serine: step 1/1.</text>
</comment>
<comment type="subunit">
    <text evidence="1">Homodimer.</text>
</comment>
<comment type="subcellular location">
    <subcellularLocation>
        <location evidence="1">Cytoplasm</location>
    </subcellularLocation>
</comment>
<comment type="similarity">
    <text evidence="1">Belongs to the SHMT family.</text>
</comment>
<feature type="chain" id="PRO_0000113593" description="Serine hydroxymethyltransferase">
    <location>
        <begin position="1"/>
        <end position="417"/>
    </location>
</feature>
<feature type="binding site" evidence="1">
    <location>
        <position position="121"/>
    </location>
    <ligand>
        <name>(6S)-5,6,7,8-tetrahydrofolate</name>
        <dbReference type="ChEBI" id="CHEBI:57453"/>
    </ligand>
</feature>
<feature type="binding site" evidence="1">
    <location>
        <begin position="125"/>
        <end position="127"/>
    </location>
    <ligand>
        <name>(6S)-5,6,7,8-tetrahydrofolate</name>
        <dbReference type="ChEBI" id="CHEBI:57453"/>
    </ligand>
</feature>
<feature type="binding site" evidence="1">
    <location>
        <begin position="355"/>
        <end position="357"/>
    </location>
    <ligand>
        <name>(6S)-5,6,7,8-tetrahydrofolate</name>
        <dbReference type="ChEBI" id="CHEBI:57453"/>
    </ligand>
</feature>
<feature type="site" description="Plays an important role in substrate specificity" evidence="1">
    <location>
        <position position="229"/>
    </location>
</feature>
<feature type="modified residue" description="N6-(pyridoxal phosphate)lysine" evidence="1">
    <location>
        <position position="230"/>
    </location>
</feature>
<accession>Q5X722</accession>
<proteinExistence type="inferred from homology"/>
<dbReference type="EC" id="2.1.2.1" evidence="1"/>
<dbReference type="EMBL" id="CR628336">
    <property type="protein sequence ID" value="CAH11939.1"/>
    <property type="molecule type" value="Genomic_DNA"/>
</dbReference>
<dbReference type="RefSeq" id="WP_010946462.1">
    <property type="nucleotide sequence ID" value="NC_006368.1"/>
</dbReference>
<dbReference type="SMR" id="Q5X722"/>
<dbReference type="GeneID" id="57034718"/>
<dbReference type="KEGG" id="lpp:lpp0791"/>
<dbReference type="LegioList" id="lpp0791"/>
<dbReference type="HOGENOM" id="CLU_022477_2_1_6"/>
<dbReference type="UniPathway" id="UPA00193"/>
<dbReference type="UniPathway" id="UPA00288">
    <property type="reaction ID" value="UER01023"/>
</dbReference>
<dbReference type="GO" id="GO:0005829">
    <property type="term" value="C:cytosol"/>
    <property type="evidence" value="ECO:0007669"/>
    <property type="project" value="TreeGrafter"/>
</dbReference>
<dbReference type="GO" id="GO:0004372">
    <property type="term" value="F:glycine hydroxymethyltransferase activity"/>
    <property type="evidence" value="ECO:0007669"/>
    <property type="project" value="UniProtKB-UniRule"/>
</dbReference>
<dbReference type="GO" id="GO:0030170">
    <property type="term" value="F:pyridoxal phosphate binding"/>
    <property type="evidence" value="ECO:0007669"/>
    <property type="project" value="UniProtKB-UniRule"/>
</dbReference>
<dbReference type="GO" id="GO:0019264">
    <property type="term" value="P:glycine biosynthetic process from serine"/>
    <property type="evidence" value="ECO:0007669"/>
    <property type="project" value="UniProtKB-UniRule"/>
</dbReference>
<dbReference type="GO" id="GO:0035999">
    <property type="term" value="P:tetrahydrofolate interconversion"/>
    <property type="evidence" value="ECO:0007669"/>
    <property type="project" value="UniProtKB-UniRule"/>
</dbReference>
<dbReference type="CDD" id="cd00378">
    <property type="entry name" value="SHMT"/>
    <property type="match status" value="1"/>
</dbReference>
<dbReference type="FunFam" id="3.40.640.10:FF:000001">
    <property type="entry name" value="Serine hydroxymethyltransferase"/>
    <property type="match status" value="1"/>
</dbReference>
<dbReference type="FunFam" id="3.90.1150.10:FF:000003">
    <property type="entry name" value="Serine hydroxymethyltransferase"/>
    <property type="match status" value="1"/>
</dbReference>
<dbReference type="Gene3D" id="3.90.1150.10">
    <property type="entry name" value="Aspartate Aminotransferase, domain 1"/>
    <property type="match status" value="1"/>
</dbReference>
<dbReference type="Gene3D" id="3.40.640.10">
    <property type="entry name" value="Type I PLP-dependent aspartate aminotransferase-like (Major domain)"/>
    <property type="match status" value="1"/>
</dbReference>
<dbReference type="HAMAP" id="MF_00051">
    <property type="entry name" value="SHMT"/>
    <property type="match status" value="1"/>
</dbReference>
<dbReference type="InterPro" id="IPR015424">
    <property type="entry name" value="PyrdxlP-dep_Trfase"/>
</dbReference>
<dbReference type="InterPro" id="IPR015421">
    <property type="entry name" value="PyrdxlP-dep_Trfase_major"/>
</dbReference>
<dbReference type="InterPro" id="IPR015422">
    <property type="entry name" value="PyrdxlP-dep_Trfase_small"/>
</dbReference>
<dbReference type="InterPro" id="IPR001085">
    <property type="entry name" value="Ser_HO-MeTrfase"/>
</dbReference>
<dbReference type="InterPro" id="IPR049943">
    <property type="entry name" value="Ser_HO-MeTrfase-like"/>
</dbReference>
<dbReference type="InterPro" id="IPR019798">
    <property type="entry name" value="Ser_HO-MeTrfase_PLP_BS"/>
</dbReference>
<dbReference type="InterPro" id="IPR039429">
    <property type="entry name" value="SHMT-like_dom"/>
</dbReference>
<dbReference type="NCBIfam" id="NF000586">
    <property type="entry name" value="PRK00011.1"/>
    <property type="match status" value="1"/>
</dbReference>
<dbReference type="PANTHER" id="PTHR11680">
    <property type="entry name" value="SERINE HYDROXYMETHYLTRANSFERASE"/>
    <property type="match status" value="1"/>
</dbReference>
<dbReference type="PANTHER" id="PTHR11680:SF50">
    <property type="entry name" value="SERINE HYDROXYMETHYLTRANSFERASE"/>
    <property type="match status" value="1"/>
</dbReference>
<dbReference type="Pfam" id="PF00464">
    <property type="entry name" value="SHMT"/>
    <property type="match status" value="1"/>
</dbReference>
<dbReference type="PIRSF" id="PIRSF000412">
    <property type="entry name" value="SHMT"/>
    <property type="match status" value="1"/>
</dbReference>
<dbReference type="SUPFAM" id="SSF53383">
    <property type="entry name" value="PLP-dependent transferases"/>
    <property type="match status" value="1"/>
</dbReference>
<dbReference type="PROSITE" id="PS00096">
    <property type="entry name" value="SHMT"/>
    <property type="match status" value="1"/>
</dbReference>